<feature type="chain" id="PRO_0000160900" description="Starvation-sensing protein RspB">
    <location>
        <begin position="1"/>
        <end position="339"/>
    </location>
</feature>
<feature type="binding site" evidence="1">
    <location>
        <position position="37"/>
    </location>
    <ligand>
        <name>Zn(2+)</name>
        <dbReference type="ChEBI" id="CHEBI:29105"/>
        <label>1</label>
        <note>catalytic</note>
    </ligand>
</feature>
<feature type="binding site" evidence="1">
    <location>
        <position position="59"/>
    </location>
    <ligand>
        <name>Zn(2+)</name>
        <dbReference type="ChEBI" id="CHEBI:29105"/>
        <label>1</label>
        <note>catalytic</note>
    </ligand>
</feature>
<feature type="binding site" evidence="1">
    <location>
        <position position="89"/>
    </location>
    <ligand>
        <name>Zn(2+)</name>
        <dbReference type="ChEBI" id="CHEBI:29105"/>
        <label>2</label>
    </ligand>
</feature>
<feature type="binding site" evidence="1">
    <location>
        <position position="92"/>
    </location>
    <ligand>
        <name>Zn(2+)</name>
        <dbReference type="ChEBI" id="CHEBI:29105"/>
        <label>2</label>
    </ligand>
</feature>
<feature type="binding site" evidence="1">
    <location>
        <position position="95"/>
    </location>
    <ligand>
        <name>Zn(2+)</name>
        <dbReference type="ChEBI" id="CHEBI:29105"/>
        <label>2</label>
    </ligand>
</feature>
<feature type="binding site" evidence="1">
    <location>
        <position position="103"/>
    </location>
    <ligand>
        <name>Zn(2+)</name>
        <dbReference type="ChEBI" id="CHEBI:29105"/>
        <label>2</label>
    </ligand>
</feature>
<feature type="binding site" evidence="1">
    <location>
        <position position="144"/>
    </location>
    <ligand>
        <name>Zn(2+)</name>
        <dbReference type="ChEBI" id="CHEBI:29105"/>
        <label>1</label>
        <note>catalytic</note>
    </ligand>
</feature>
<proteinExistence type="evidence at transcript level"/>
<organism>
    <name type="scientific">Escherichia coli (strain K12)</name>
    <dbReference type="NCBI Taxonomy" id="83333"/>
    <lineage>
        <taxon>Bacteria</taxon>
        <taxon>Pseudomonadati</taxon>
        <taxon>Pseudomonadota</taxon>
        <taxon>Gammaproteobacteria</taxon>
        <taxon>Enterobacterales</taxon>
        <taxon>Enterobacteriaceae</taxon>
        <taxon>Escherichia</taxon>
    </lineage>
</organism>
<gene>
    <name evidence="3" type="primary">rspB</name>
    <name type="ordered locus">b1580</name>
    <name type="ordered locus">JW1572</name>
</gene>
<sequence length="339" mass="36564">MKSILIEKPNQLAIVEREIPTPSAGEVRVKVKLAGICGSDSHIYRGHNPFAKYPRVIGHEFFGVIDAVGEGVESARVGERVAVDPVVSCGHCYPCSIGKPNVCTTLAVLGVHADGGFSEYAVVPAKNAWKIPEAVADQYAVMIEPFTIAANVTGHGQPTENDTVLVYGAGPIGLTIVQVLKGVYNVKNVIVADRIDERLEKAKESGADWAINNSQTPLGEIFTEKGIKPTLIIDAACHPSILKEAVTLASPAARIVLMGFSSEPSEVIQQGITGKELSIFSSRLNANKFPIVIDWLSKGLIKPEKLITHTFDFQHVADAISLFEQDQKHCCKVLLTFSE</sequence>
<comment type="function">
    <text>Not known; probable catabolic enzyme.</text>
</comment>
<comment type="cofactor">
    <cofactor evidence="1">
        <name>Zn(2+)</name>
        <dbReference type="ChEBI" id="CHEBI:29105"/>
    </cofactor>
    <text evidence="1">Binds 2 Zn(2+) ions per subunit.</text>
</comment>
<comment type="induction">
    <text evidence="2">Repressed by RspR.</text>
</comment>
<comment type="similarity">
    <text evidence="4">Belongs to the zinc-containing alcohol dehydrogenase family.</text>
</comment>
<name>RSPB_ECOLI</name>
<accession>P38105</accession>
<keyword id="KW-0479">Metal-binding</keyword>
<keyword id="KW-0560">Oxidoreductase</keyword>
<keyword id="KW-1185">Reference proteome</keyword>
<keyword id="KW-0862">Zinc</keyword>
<dbReference type="EC" id="1.1.1.-"/>
<dbReference type="EMBL" id="L31628">
    <property type="protein sequence ID" value="AAA21686.1"/>
    <property type="molecule type" value="Genomic_DNA"/>
</dbReference>
<dbReference type="EMBL" id="U00096">
    <property type="protein sequence ID" value="AAC74652.1"/>
    <property type="molecule type" value="Genomic_DNA"/>
</dbReference>
<dbReference type="EMBL" id="AP009048">
    <property type="protein sequence ID" value="BAA15284.1"/>
    <property type="molecule type" value="Genomic_DNA"/>
</dbReference>
<dbReference type="PIR" id="I81185">
    <property type="entry name" value="I81185"/>
</dbReference>
<dbReference type="RefSeq" id="NP_416097.1">
    <property type="nucleotide sequence ID" value="NC_000913.3"/>
</dbReference>
<dbReference type="RefSeq" id="WP_000836066.1">
    <property type="nucleotide sequence ID" value="NZ_SSZK01000001.1"/>
</dbReference>
<dbReference type="SMR" id="P38105"/>
<dbReference type="BioGRID" id="4260232">
    <property type="interactions" value="14"/>
</dbReference>
<dbReference type="BioGRID" id="850487">
    <property type="interactions" value="1"/>
</dbReference>
<dbReference type="FunCoup" id="P38105">
    <property type="interactions" value="54"/>
</dbReference>
<dbReference type="IntAct" id="P38105">
    <property type="interactions" value="1"/>
</dbReference>
<dbReference type="STRING" id="511145.b1580"/>
<dbReference type="PaxDb" id="511145-b1580"/>
<dbReference type="EnsemblBacteria" id="AAC74652">
    <property type="protein sequence ID" value="AAC74652"/>
    <property type="gene ID" value="b1580"/>
</dbReference>
<dbReference type="GeneID" id="946127"/>
<dbReference type="KEGG" id="ecj:JW1572"/>
<dbReference type="KEGG" id="eco:b1580"/>
<dbReference type="KEGG" id="ecoc:C3026_09110"/>
<dbReference type="PATRIC" id="fig|1411691.4.peg.682"/>
<dbReference type="EchoBASE" id="EB2346"/>
<dbReference type="eggNOG" id="COG1063">
    <property type="taxonomic scope" value="Bacteria"/>
</dbReference>
<dbReference type="HOGENOM" id="CLU_026673_11_0_6"/>
<dbReference type="InParanoid" id="P38105"/>
<dbReference type="OMA" id="CSVGRPN"/>
<dbReference type="OrthoDB" id="9773078at2"/>
<dbReference type="PhylomeDB" id="P38105"/>
<dbReference type="BioCyc" id="EcoCyc:G6838-MONOMER"/>
<dbReference type="PRO" id="PR:P38105"/>
<dbReference type="Proteomes" id="UP000000625">
    <property type="component" value="Chromosome"/>
</dbReference>
<dbReference type="GO" id="GO:0016491">
    <property type="term" value="F:oxidoreductase activity"/>
    <property type="evidence" value="ECO:0007669"/>
    <property type="project" value="UniProtKB-KW"/>
</dbReference>
<dbReference type="GO" id="GO:0008270">
    <property type="term" value="F:zinc ion binding"/>
    <property type="evidence" value="ECO:0007669"/>
    <property type="project" value="InterPro"/>
</dbReference>
<dbReference type="CDD" id="cd08261">
    <property type="entry name" value="Zn_ADH7"/>
    <property type="match status" value="1"/>
</dbReference>
<dbReference type="Gene3D" id="3.90.180.10">
    <property type="entry name" value="Medium-chain alcohol dehydrogenases, catalytic domain"/>
    <property type="match status" value="1"/>
</dbReference>
<dbReference type="Gene3D" id="3.40.50.720">
    <property type="entry name" value="NAD(P)-binding Rossmann-like Domain"/>
    <property type="match status" value="1"/>
</dbReference>
<dbReference type="InterPro" id="IPR013149">
    <property type="entry name" value="ADH-like_C"/>
</dbReference>
<dbReference type="InterPro" id="IPR013154">
    <property type="entry name" value="ADH-like_N"/>
</dbReference>
<dbReference type="InterPro" id="IPR002328">
    <property type="entry name" value="ADH_Zn_CS"/>
</dbReference>
<dbReference type="InterPro" id="IPR011032">
    <property type="entry name" value="GroES-like_sf"/>
</dbReference>
<dbReference type="InterPro" id="IPR036291">
    <property type="entry name" value="NAD(P)-bd_dom_sf"/>
</dbReference>
<dbReference type="InterPro" id="IPR050129">
    <property type="entry name" value="Zn_alcohol_dh"/>
</dbReference>
<dbReference type="NCBIfam" id="NF007489">
    <property type="entry name" value="PRK10083.1"/>
    <property type="match status" value="1"/>
</dbReference>
<dbReference type="PANTHER" id="PTHR43401">
    <property type="entry name" value="L-THREONINE 3-DEHYDROGENASE"/>
    <property type="match status" value="1"/>
</dbReference>
<dbReference type="PANTHER" id="PTHR43401:SF2">
    <property type="entry name" value="L-THREONINE 3-DEHYDROGENASE"/>
    <property type="match status" value="1"/>
</dbReference>
<dbReference type="Pfam" id="PF08240">
    <property type="entry name" value="ADH_N"/>
    <property type="match status" value="1"/>
</dbReference>
<dbReference type="Pfam" id="PF00107">
    <property type="entry name" value="ADH_zinc_N"/>
    <property type="match status" value="1"/>
</dbReference>
<dbReference type="SUPFAM" id="SSF50129">
    <property type="entry name" value="GroES-like"/>
    <property type="match status" value="1"/>
</dbReference>
<dbReference type="SUPFAM" id="SSF51735">
    <property type="entry name" value="NAD(P)-binding Rossmann-fold domains"/>
    <property type="match status" value="1"/>
</dbReference>
<dbReference type="PROSITE" id="PS00059">
    <property type="entry name" value="ADH_ZINC"/>
    <property type="match status" value="1"/>
</dbReference>
<reference key="1">
    <citation type="journal article" date="1994" name="Science">
        <title>Sensing starvation: a homoserine lactone-dependent signaling pathway in Escherichia coli.</title>
        <authorList>
            <person name="Huisman G.W."/>
            <person name="Kolter R."/>
        </authorList>
    </citation>
    <scope>NUCLEOTIDE SEQUENCE [GENOMIC DNA]</scope>
    <source>
        <strain>K12 / W3110 / ATCC 27325 / DSM 5911</strain>
    </source>
</reference>
<reference key="2">
    <citation type="journal article" date="1996" name="DNA Res.">
        <title>A 570-kb DNA sequence of the Escherichia coli K-12 genome corresponding to the 28.0-40.1 min region on the linkage map.</title>
        <authorList>
            <person name="Aiba H."/>
            <person name="Baba T."/>
            <person name="Fujita K."/>
            <person name="Hayashi K."/>
            <person name="Inada T."/>
            <person name="Isono K."/>
            <person name="Itoh T."/>
            <person name="Kasai H."/>
            <person name="Kashimoto K."/>
            <person name="Kimura S."/>
            <person name="Kitakawa M."/>
            <person name="Kitagawa M."/>
            <person name="Makino K."/>
            <person name="Miki T."/>
            <person name="Mizobuchi K."/>
            <person name="Mori H."/>
            <person name="Mori T."/>
            <person name="Motomura K."/>
            <person name="Nakade S."/>
            <person name="Nakamura Y."/>
            <person name="Nashimoto H."/>
            <person name="Nishio Y."/>
            <person name="Oshima T."/>
            <person name="Saito N."/>
            <person name="Sampei G."/>
            <person name="Seki Y."/>
            <person name="Sivasundaram S."/>
            <person name="Tagami H."/>
            <person name="Takeda J."/>
            <person name="Takemoto K."/>
            <person name="Takeuchi Y."/>
            <person name="Wada C."/>
            <person name="Yamamoto Y."/>
            <person name="Horiuchi T."/>
        </authorList>
    </citation>
    <scope>NUCLEOTIDE SEQUENCE [LARGE SCALE GENOMIC DNA]</scope>
    <source>
        <strain>K12 / W3110 / ATCC 27325 / DSM 5911</strain>
    </source>
</reference>
<reference key="3">
    <citation type="journal article" date="1997" name="Science">
        <title>The complete genome sequence of Escherichia coli K-12.</title>
        <authorList>
            <person name="Blattner F.R."/>
            <person name="Plunkett G. III"/>
            <person name="Bloch C.A."/>
            <person name="Perna N.T."/>
            <person name="Burland V."/>
            <person name="Riley M."/>
            <person name="Collado-Vides J."/>
            <person name="Glasner J.D."/>
            <person name="Rode C.K."/>
            <person name="Mayhew G.F."/>
            <person name="Gregor J."/>
            <person name="Davis N.W."/>
            <person name="Kirkpatrick H.A."/>
            <person name="Goeden M.A."/>
            <person name="Rose D.J."/>
            <person name="Mau B."/>
            <person name="Shao Y."/>
        </authorList>
    </citation>
    <scope>NUCLEOTIDE SEQUENCE [LARGE SCALE GENOMIC DNA]</scope>
    <source>
        <strain>K12 / MG1655 / ATCC 47076</strain>
    </source>
</reference>
<reference key="4">
    <citation type="journal article" date="2006" name="Mol. Syst. Biol.">
        <title>Highly accurate genome sequences of Escherichia coli K-12 strains MG1655 and W3110.</title>
        <authorList>
            <person name="Hayashi K."/>
            <person name="Morooka N."/>
            <person name="Yamamoto Y."/>
            <person name="Fujita K."/>
            <person name="Isono K."/>
            <person name="Choi S."/>
            <person name="Ohtsubo E."/>
            <person name="Baba T."/>
            <person name="Wanner B.L."/>
            <person name="Mori H."/>
            <person name="Horiuchi T."/>
        </authorList>
    </citation>
    <scope>NUCLEOTIDE SEQUENCE [LARGE SCALE GENOMIC DNA]</scope>
    <source>
        <strain>K12 / W3110 / ATCC 27325 / DSM 5911</strain>
    </source>
</reference>
<reference key="5">
    <citation type="journal article" date="2012" name="Biosci. Biotechnol. Biochem.">
        <title>YdfH identified as a repressor of rspA by the use of reduced genome Escherichia coli MGF-01.</title>
        <authorList>
            <person name="Sakihama Y."/>
            <person name="Mizoguchi H."/>
            <person name="Oshima T."/>
            <person name="Ogasawara N."/>
        </authorList>
    </citation>
    <scope>TRANSCRIPTIONAL REGULATION</scope>
    <source>
        <strain>K12 / W3110 / ATCC 27325 / DSM 5911</strain>
    </source>
</reference>
<evidence type="ECO:0000250" key="1"/>
<evidence type="ECO:0000269" key="2">
    <source>
    </source>
</evidence>
<evidence type="ECO:0000303" key="3">
    <source>
    </source>
</evidence>
<evidence type="ECO:0000305" key="4"/>
<protein>
    <recommendedName>
        <fullName>Starvation-sensing protein RspB</fullName>
        <ecNumber>1.1.1.-</ecNumber>
    </recommendedName>
</protein>